<name>RRAA_KLEP3</name>
<comment type="function">
    <text evidence="1">Globally modulates RNA abundance by binding to RNase E (Rne) and regulating its endonucleolytic activity. Can modulate Rne action in a substrate-dependent manner by altering the composition of the degradosome. Modulates RNA-binding and helicase activities of the degradosome.</text>
</comment>
<comment type="subunit">
    <text evidence="1">Homotrimer. Binds to both RNA-binding sites in the C-terminal region of Rne and to RhlB.</text>
</comment>
<comment type="subcellular location">
    <subcellularLocation>
        <location evidence="1">Cytoplasm</location>
    </subcellularLocation>
</comment>
<comment type="similarity">
    <text evidence="1">Belongs to the RraA family.</text>
</comment>
<keyword id="KW-0963">Cytoplasm</keyword>
<organism>
    <name type="scientific">Klebsiella pneumoniae (strain 342)</name>
    <dbReference type="NCBI Taxonomy" id="507522"/>
    <lineage>
        <taxon>Bacteria</taxon>
        <taxon>Pseudomonadati</taxon>
        <taxon>Pseudomonadota</taxon>
        <taxon>Gammaproteobacteria</taxon>
        <taxon>Enterobacterales</taxon>
        <taxon>Enterobacteriaceae</taxon>
        <taxon>Klebsiella/Raoultella group</taxon>
        <taxon>Klebsiella</taxon>
        <taxon>Klebsiella pneumoniae complex</taxon>
    </lineage>
</organism>
<evidence type="ECO:0000255" key="1">
    <source>
        <dbReference type="HAMAP-Rule" id="MF_00471"/>
    </source>
</evidence>
<reference key="1">
    <citation type="journal article" date="2008" name="PLoS Genet.">
        <title>Complete genome sequence of the N2-fixing broad host range endophyte Klebsiella pneumoniae 342 and virulence predictions verified in mice.</title>
        <authorList>
            <person name="Fouts D.E."/>
            <person name="Tyler H.L."/>
            <person name="DeBoy R.T."/>
            <person name="Daugherty S."/>
            <person name="Ren Q."/>
            <person name="Badger J.H."/>
            <person name="Durkin A.S."/>
            <person name="Huot H."/>
            <person name="Shrivastava S."/>
            <person name="Kothari S."/>
            <person name="Dodson R.J."/>
            <person name="Mohamoud Y."/>
            <person name="Khouri H."/>
            <person name="Roesch L.F.W."/>
            <person name="Krogfelt K.A."/>
            <person name="Struve C."/>
            <person name="Triplett E.W."/>
            <person name="Methe B.A."/>
        </authorList>
    </citation>
    <scope>NUCLEOTIDE SEQUENCE [LARGE SCALE GENOMIC DNA]</scope>
    <source>
        <strain>342</strain>
    </source>
</reference>
<dbReference type="EMBL" id="CP000964">
    <property type="protein sequence ID" value="ACI09286.1"/>
    <property type="molecule type" value="Genomic_DNA"/>
</dbReference>
<dbReference type="SMR" id="B5XZ39"/>
<dbReference type="KEGG" id="kpe:KPK_5455"/>
<dbReference type="HOGENOM" id="CLU_072626_4_0_6"/>
<dbReference type="Proteomes" id="UP000001734">
    <property type="component" value="Chromosome"/>
</dbReference>
<dbReference type="GO" id="GO:0005829">
    <property type="term" value="C:cytosol"/>
    <property type="evidence" value="ECO:0007669"/>
    <property type="project" value="TreeGrafter"/>
</dbReference>
<dbReference type="GO" id="GO:0060698">
    <property type="term" value="F:endoribonuclease inhibitor activity"/>
    <property type="evidence" value="ECO:0007669"/>
    <property type="project" value="UniProtKB-UniRule"/>
</dbReference>
<dbReference type="GO" id="GO:0019899">
    <property type="term" value="F:enzyme binding"/>
    <property type="evidence" value="ECO:0007669"/>
    <property type="project" value="UniProtKB-UniRule"/>
</dbReference>
<dbReference type="GO" id="GO:1902369">
    <property type="term" value="P:negative regulation of RNA catabolic process"/>
    <property type="evidence" value="ECO:0007669"/>
    <property type="project" value="TreeGrafter"/>
</dbReference>
<dbReference type="CDD" id="cd16841">
    <property type="entry name" value="RraA_family"/>
    <property type="match status" value="1"/>
</dbReference>
<dbReference type="FunFam" id="3.50.30.40:FF:000001">
    <property type="entry name" value="Regulator of ribonuclease activity A"/>
    <property type="match status" value="1"/>
</dbReference>
<dbReference type="Gene3D" id="3.50.30.40">
    <property type="entry name" value="Ribonuclease E inhibitor RraA/RraA-like"/>
    <property type="match status" value="1"/>
</dbReference>
<dbReference type="HAMAP" id="MF_00471">
    <property type="entry name" value="RraA"/>
    <property type="match status" value="1"/>
</dbReference>
<dbReference type="InterPro" id="IPR010203">
    <property type="entry name" value="RraA"/>
</dbReference>
<dbReference type="InterPro" id="IPR005493">
    <property type="entry name" value="RraA/RraA-like"/>
</dbReference>
<dbReference type="InterPro" id="IPR036704">
    <property type="entry name" value="RraA/RraA-like_sf"/>
</dbReference>
<dbReference type="InterPro" id="IPR014339">
    <property type="entry name" value="RraA_gpbac"/>
</dbReference>
<dbReference type="NCBIfam" id="TIGR01935">
    <property type="entry name" value="NOT-MenG"/>
    <property type="match status" value="1"/>
</dbReference>
<dbReference type="NCBIfam" id="NF006875">
    <property type="entry name" value="PRK09372.1"/>
    <property type="match status" value="1"/>
</dbReference>
<dbReference type="NCBIfam" id="TIGR02998">
    <property type="entry name" value="RraA_entero"/>
    <property type="match status" value="1"/>
</dbReference>
<dbReference type="PANTHER" id="PTHR33254">
    <property type="entry name" value="4-HYDROXY-4-METHYL-2-OXOGLUTARATE ALDOLASE 3-RELATED"/>
    <property type="match status" value="1"/>
</dbReference>
<dbReference type="PANTHER" id="PTHR33254:SF29">
    <property type="entry name" value="REGULATOR OF RIBONUCLEASE ACTIVITY A"/>
    <property type="match status" value="1"/>
</dbReference>
<dbReference type="Pfam" id="PF03737">
    <property type="entry name" value="RraA-like"/>
    <property type="match status" value="1"/>
</dbReference>
<dbReference type="SUPFAM" id="SSF89562">
    <property type="entry name" value="RraA-like"/>
    <property type="match status" value="1"/>
</dbReference>
<gene>
    <name evidence="1" type="primary">rraA</name>
    <name type="ordered locus">KPK_5455</name>
</gene>
<accession>B5XZ39</accession>
<sequence>MKYDTSELCDIYQEDVNVVEPLFSNFGGRSSFGGQIITVKCFEDNGLLYDLLEQNGRGHILLIDGGGSVRRALIDADLARLAVQNEWEGLVVYGAVRQVDDLEELDIGIQALAAIPVGAAGEGIGESDVRVNFGGVTFFSGDHLYADNTGMILSEDPLDIE</sequence>
<feature type="chain" id="PRO_1000194863" description="Regulator of ribonuclease activity A">
    <location>
        <begin position="1"/>
        <end position="161"/>
    </location>
</feature>
<protein>
    <recommendedName>
        <fullName evidence="1">Regulator of ribonuclease activity A</fullName>
    </recommendedName>
</protein>
<proteinExistence type="inferred from homology"/>